<evidence type="ECO:0000255" key="1">
    <source>
        <dbReference type="HAMAP-Rule" id="MF_00251"/>
    </source>
</evidence>
<evidence type="ECO:0000305" key="2"/>
<proteinExistence type="inferred from homology"/>
<gene>
    <name evidence="1" type="primary">rpmJ</name>
    <name type="ordered locus">SPs0065</name>
</gene>
<reference key="1">
    <citation type="journal article" date="2003" name="Genome Res.">
        <title>Genome sequence of an M3 strain of Streptococcus pyogenes reveals a large-scale genomic rearrangement in invasive strains and new insights into phage evolution.</title>
        <authorList>
            <person name="Nakagawa I."/>
            <person name="Kurokawa K."/>
            <person name="Yamashita A."/>
            <person name="Nakata M."/>
            <person name="Tomiyasu Y."/>
            <person name="Okahashi N."/>
            <person name="Kawabata S."/>
            <person name="Yamazaki K."/>
            <person name="Shiba T."/>
            <person name="Yasunaga T."/>
            <person name="Hayashi H."/>
            <person name="Hattori M."/>
            <person name="Hamada S."/>
        </authorList>
    </citation>
    <scope>NUCLEOTIDE SEQUENCE [LARGE SCALE GENOMIC DNA]</scope>
    <source>
        <strain>SSI-1</strain>
    </source>
</reference>
<organism>
    <name type="scientific">Streptococcus pyogenes serotype M3 (strain SSI-1)</name>
    <dbReference type="NCBI Taxonomy" id="193567"/>
    <lineage>
        <taxon>Bacteria</taxon>
        <taxon>Bacillati</taxon>
        <taxon>Bacillota</taxon>
        <taxon>Bacilli</taxon>
        <taxon>Lactobacillales</taxon>
        <taxon>Streptococcaceae</taxon>
        <taxon>Streptococcus</taxon>
    </lineage>
</organism>
<protein>
    <recommendedName>
        <fullName evidence="1">Large ribosomal subunit protein bL36</fullName>
    </recommendedName>
    <alternativeName>
        <fullName evidence="2">50S ribosomal protein L36</fullName>
    </alternativeName>
</protein>
<feature type="chain" id="PRO_0000411515" description="Large ribosomal subunit protein bL36">
    <location>
        <begin position="1"/>
        <end position="38"/>
    </location>
</feature>
<dbReference type="EMBL" id="BA000034">
    <property type="protein sequence ID" value="BAC63160.1"/>
    <property type="molecule type" value="Genomic_DNA"/>
</dbReference>
<dbReference type="RefSeq" id="WP_000868345.1">
    <property type="nucleotide sequence ID" value="NC_004606.1"/>
</dbReference>
<dbReference type="SMR" id="P0DE51"/>
<dbReference type="GeneID" id="93860206"/>
<dbReference type="KEGG" id="sps:SPs0065"/>
<dbReference type="HOGENOM" id="CLU_135723_6_2_9"/>
<dbReference type="GO" id="GO:0005737">
    <property type="term" value="C:cytoplasm"/>
    <property type="evidence" value="ECO:0007669"/>
    <property type="project" value="UniProtKB-ARBA"/>
</dbReference>
<dbReference type="GO" id="GO:1990904">
    <property type="term" value="C:ribonucleoprotein complex"/>
    <property type="evidence" value="ECO:0007669"/>
    <property type="project" value="UniProtKB-KW"/>
</dbReference>
<dbReference type="GO" id="GO:0005840">
    <property type="term" value="C:ribosome"/>
    <property type="evidence" value="ECO:0007669"/>
    <property type="project" value="UniProtKB-KW"/>
</dbReference>
<dbReference type="GO" id="GO:0003735">
    <property type="term" value="F:structural constituent of ribosome"/>
    <property type="evidence" value="ECO:0007669"/>
    <property type="project" value="InterPro"/>
</dbReference>
<dbReference type="GO" id="GO:0006412">
    <property type="term" value="P:translation"/>
    <property type="evidence" value="ECO:0007669"/>
    <property type="project" value="UniProtKB-UniRule"/>
</dbReference>
<dbReference type="HAMAP" id="MF_00251">
    <property type="entry name" value="Ribosomal_bL36"/>
    <property type="match status" value="1"/>
</dbReference>
<dbReference type="InterPro" id="IPR000473">
    <property type="entry name" value="Ribosomal_bL36"/>
</dbReference>
<dbReference type="InterPro" id="IPR035977">
    <property type="entry name" value="Ribosomal_bL36_sp"/>
</dbReference>
<dbReference type="NCBIfam" id="TIGR01022">
    <property type="entry name" value="rpmJ_bact"/>
    <property type="match status" value="1"/>
</dbReference>
<dbReference type="PANTHER" id="PTHR42888">
    <property type="entry name" value="50S RIBOSOMAL PROTEIN L36, CHLOROPLASTIC"/>
    <property type="match status" value="1"/>
</dbReference>
<dbReference type="PANTHER" id="PTHR42888:SF1">
    <property type="entry name" value="LARGE RIBOSOMAL SUBUNIT PROTEIN BL36C"/>
    <property type="match status" value="1"/>
</dbReference>
<dbReference type="Pfam" id="PF00444">
    <property type="entry name" value="Ribosomal_L36"/>
    <property type="match status" value="1"/>
</dbReference>
<dbReference type="SUPFAM" id="SSF57840">
    <property type="entry name" value="Ribosomal protein L36"/>
    <property type="match status" value="1"/>
</dbReference>
<dbReference type="PROSITE" id="PS00828">
    <property type="entry name" value="RIBOSOMAL_L36"/>
    <property type="match status" value="1"/>
</dbReference>
<comment type="similarity">
    <text evidence="1">Belongs to the bacterial ribosomal protein bL36 family.</text>
</comment>
<keyword id="KW-0687">Ribonucleoprotein</keyword>
<keyword id="KW-0689">Ribosomal protein</keyword>
<sequence>MKVRPSVKPICEYCKVIRRNGRVMVICPTNPKHKQRQG</sequence>
<name>RL36_STRPQ</name>
<accession>P0DE51</accession>
<accession>P66304</accession>
<accession>Q9A1V2</accession>